<feature type="chain" id="PRO_1000139850" description="HTH-type transcriptional regulator MalT">
    <location>
        <begin position="1"/>
        <end position="901"/>
    </location>
</feature>
<feature type="domain" description="HTH luxR-type" evidence="1">
    <location>
        <begin position="829"/>
        <end position="894"/>
    </location>
</feature>
<feature type="DNA-binding region" description="H-T-H motif" evidence="1">
    <location>
        <begin position="853"/>
        <end position="872"/>
    </location>
</feature>
<feature type="binding site" evidence="1">
    <location>
        <begin position="39"/>
        <end position="46"/>
    </location>
    <ligand>
        <name>ATP</name>
        <dbReference type="ChEBI" id="CHEBI:30616"/>
    </ligand>
</feature>
<name>MALT_ECOSM</name>
<evidence type="ECO:0000255" key="1">
    <source>
        <dbReference type="HAMAP-Rule" id="MF_01247"/>
    </source>
</evidence>
<reference key="1">
    <citation type="journal article" date="2008" name="J. Bacteriol.">
        <title>Insights into the environmental resistance gene pool from the genome sequence of the multidrug-resistant environmental isolate Escherichia coli SMS-3-5.</title>
        <authorList>
            <person name="Fricke W.F."/>
            <person name="Wright M.S."/>
            <person name="Lindell A.H."/>
            <person name="Harkins D.M."/>
            <person name="Baker-Austin C."/>
            <person name="Ravel J."/>
            <person name="Stepanauskas R."/>
        </authorList>
    </citation>
    <scope>NUCLEOTIDE SEQUENCE [LARGE SCALE GENOMIC DNA]</scope>
    <source>
        <strain>SMS-3-5 / SECEC</strain>
    </source>
</reference>
<protein>
    <recommendedName>
        <fullName evidence="1">HTH-type transcriptional regulator MalT</fullName>
    </recommendedName>
    <alternativeName>
        <fullName evidence="1">ATP-dependent transcriptional activator MalT</fullName>
    </alternativeName>
</protein>
<accession>B1LI79</accession>
<gene>
    <name evidence="1" type="primary">malT</name>
    <name type="ordered locus">EcSMS35_3699</name>
</gene>
<comment type="function">
    <text evidence="1">Positively regulates the transcription of the maltose regulon whose gene products are responsible for uptake and catabolism of malto-oligosaccharides. Specifically binds to the promoter region of its target genes, recognizing a short DNA motif called the MalT box.</text>
</comment>
<comment type="activity regulation">
    <text evidence="1">Activated by ATP and maltotriose, which are both required for DNA binding.</text>
</comment>
<comment type="subunit">
    <text evidence="1">Monomer in solution. Oligomerizes to an active state in the presence of the positive effectors ATP and maltotriose.</text>
</comment>
<comment type="similarity">
    <text evidence="1">Belongs to the MalT family.</text>
</comment>
<organism>
    <name type="scientific">Escherichia coli (strain SMS-3-5 / SECEC)</name>
    <dbReference type="NCBI Taxonomy" id="439855"/>
    <lineage>
        <taxon>Bacteria</taxon>
        <taxon>Pseudomonadati</taxon>
        <taxon>Pseudomonadota</taxon>
        <taxon>Gammaproteobacteria</taxon>
        <taxon>Enterobacterales</taxon>
        <taxon>Enterobacteriaceae</taxon>
        <taxon>Escherichia</taxon>
    </lineage>
</organism>
<keyword id="KW-0010">Activator</keyword>
<keyword id="KW-0067">ATP-binding</keyword>
<keyword id="KW-0119">Carbohydrate metabolism</keyword>
<keyword id="KW-0238">DNA-binding</keyword>
<keyword id="KW-0547">Nucleotide-binding</keyword>
<keyword id="KW-0804">Transcription</keyword>
<keyword id="KW-0805">Transcription regulation</keyword>
<proteinExistence type="inferred from homology"/>
<sequence length="901" mass="103029">MLIPSKLSRPVRLDHTVVRERLLAKLSGANNFRLALITSPAGYGKTTLISQWAAGKNDIGWYSLDEGDNQQERFASYLIAAVQQATNGHCAICETMAQKRQYASLTSLFAQLFIELAEWHSPLYLVIDDYHLITNPVIHESMRFFIRHQPENLTLVVLSRNLPQLGIANLRVRDQLLEIGSQQLAFTHQEAKQFFDCRLSSPIEAAESSRICDDVSGWATALQLIALSARQNTHSAHKSARRLAGINASHLSDYLVDEVLDNVDLATRHFLLKSAILRSMNDALINRVTGEENGQMRLEEIERQGLFLQRMDDTGEWFCYHPLFGNFLRQRCQWELAAELPEIHRAAAESWMAQGFPSEAIHHALAAGDALMLRDILLNHAWSLFNHSELSLLEESLKALPWDSLLENPQLVLLQAWLMQSQHRYGEVNTLLARAEHEIKDIREGTMHAEFNALRAQVAINDGNPDEAERLAKLALEELPPGWFYSRIVATSVLGEVLHCKGELTRSLALMQQTEQMARQHDVWHYALWSLIQQSEILFAQGFLQTAWETQEKAFQLINEQHLEQLPMHEFLVRIRAQLLWAWARLDEAEASARSGIEVLSSYQPQQQLQCLAMLIQCSLARGDLDNARSQLNRLENLLGNGKYHSDWISNANKVRVIYWQMTGDKAAAANWLRHTAKPEFANNHFLQGQWRNIARAQILLGEFEPAEIVLEELNENARSLRLMSDLNRNLLLLNQLYWQAGRKSDAQRVLLDALKLANRTGFISHFVIEGEAMAQQLRQLIQLNTLPELEQHRAQRILREINQHHRHKFAHFDENFVERLLNHPEVPELIRTSPLTQREWQVLGLIYSGYSNEQIAGELEVAATTIKTHIRNLYQKLGVAHRQAAVQHAQKLLKMMGYGV</sequence>
<dbReference type="EMBL" id="CP000970">
    <property type="protein sequence ID" value="ACB19160.1"/>
    <property type="molecule type" value="Genomic_DNA"/>
</dbReference>
<dbReference type="RefSeq" id="WP_000906949.1">
    <property type="nucleotide sequence ID" value="NC_010498.1"/>
</dbReference>
<dbReference type="SMR" id="B1LI79"/>
<dbReference type="KEGG" id="ecm:EcSMS35_3699"/>
<dbReference type="HOGENOM" id="CLU_006325_3_0_6"/>
<dbReference type="Proteomes" id="UP000007011">
    <property type="component" value="Chromosome"/>
</dbReference>
<dbReference type="GO" id="GO:0005524">
    <property type="term" value="F:ATP binding"/>
    <property type="evidence" value="ECO:0007669"/>
    <property type="project" value="UniProtKB-UniRule"/>
</dbReference>
<dbReference type="GO" id="GO:0003677">
    <property type="term" value="F:DNA binding"/>
    <property type="evidence" value="ECO:0007669"/>
    <property type="project" value="UniProtKB-KW"/>
</dbReference>
<dbReference type="GO" id="GO:0003700">
    <property type="term" value="F:DNA-binding transcription factor activity"/>
    <property type="evidence" value="ECO:0007669"/>
    <property type="project" value="UniProtKB-UniRule"/>
</dbReference>
<dbReference type="GO" id="GO:0045913">
    <property type="term" value="P:positive regulation of carbohydrate metabolic process"/>
    <property type="evidence" value="ECO:0007669"/>
    <property type="project" value="UniProtKB-UniRule"/>
</dbReference>
<dbReference type="GO" id="GO:0045893">
    <property type="term" value="P:positive regulation of DNA-templated transcription"/>
    <property type="evidence" value="ECO:0007669"/>
    <property type="project" value="UniProtKB-UniRule"/>
</dbReference>
<dbReference type="CDD" id="cd06170">
    <property type="entry name" value="LuxR_C_like"/>
    <property type="match status" value="1"/>
</dbReference>
<dbReference type="FunFam" id="1.10.10.10:FF:000115">
    <property type="entry name" value="HTH-type transcriptional regulator MalT"/>
    <property type="match status" value="1"/>
</dbReference>
<dbReference type="FunFam" id="1.25.40.10:FF:000086">
    <property type="entry name" value="HTH-type transcriptional regulator MalT"/>
    <property type="match status" value="1"/>
</dbReference>
<dbReference type="Gene3D" id="3.40.50.300">
    <property type="entry name" value="P-loop containing nucleotide triphosphate hydrolases"/>
    <property type="match status" value="1"/>
</dbReference>
<dbReference type="Gene3D" id="1.25.40.10">
    <property type="entry name" value="Tetratricopeptide repeat domain"/>
    <property type="match status" value="1"/>
</dbReference>
<dbReference type="Gene3D" id="1.10.10.10">
    <property type="entry name" value="Winged helix-like DNA-binding domain superfamily/Winged helix DNA-binding domain"/>
    <property type="match status" value="1"/>
</dbReference>
<dbReference type="HAMAP" id="MF_01247">
    <property type="entry name" value="HTH_type_MalT"/>
    <property type="match status" value="1"/>
</dbReference>
<dbReference type="InterPro" id="IPR027417">
    <property type="entry name" value="P-loop_NTPase"/>
</dbReference>
<dbReference type="InterPro" id="IPR016032">
    <property type="entry name" value="Sig_transdc_resp-reg_C-effctor"/>
</dbReference>
<dbReference type="InterPro" id="IPR011990">
    <property type="entry name" value="TPR-like_helical_dom_sf"/>
</dbReference>
<dbReference type="InterPro" id="IPR041617">
    <property type="entry name" value="TPR_MalT"/>
</dbReference>
<dbReference type="InterPro" id="IPR023768">
    <property type="entry name" value="Tscrpt_reg_HTH_MalT"/>
</dbReference>
<dbReference type="InterPro" id="IPR000792">
    <property type="entry name" value="Tscrpt_reg_LuxR_C"/>
</dbReference>
<dbReference type="InterPro" id="IPR036388">
    <property type="entry name" value="WH-like_DNA-bd_sf"/>
</dbReference>
<dbReference type="NCBIfam" id="NF003420">
    <property type="entry name" value="PRK04841.1"/>
    <property type="match status" value="1"/>
</dbReference>
<dbReference type="PANTHER" id="PTHR44688">
    <property type="entry name" value="DNA-BINDING TRANSCRIPTIONAL ACTIVATOR DEVR_DOSR"/>
    <property type="match status" value="1"/>
</dbReference>
<dbReference type="PANTHER" id="PTHR44688:SF16">
    <property type="entry name" value="DNA-BINDING TRANSCRIPTIONAL ACTIVATOR DEVR_DOSR"/>
    <property type="match status" value="1"/>
</dbReference>
<dbReference type="Pfam" id="PF00196">
    <property type="entry name" value="GerE"/>
    <property type="match status" value="1"/>
</dbReference>
<dbReference type="Pfam" id="PF17874">
    <property type="entry name" value="TPR_MalT"/>
    <property type="match status" value="1"/>
</dbReference>
<dbReference type="PRINTS" id="PR00038">
    <property type="entry name" value="HTHLUXR"/>
</dbReference>
<dbReference type="SMART" id="SM00421">
    <property type="entry name" value="HTH_LUXR"/>
    <property type="match status" value="1"/>
</dbReference>
<dbReference type="SUPFAM" id="SSF46894">
    <property type="entry name" value="C-terminal effector domain of the bipartite response regulators"/>
    <property type="match status" value="1"/>
</dbReference>
<dbReference type="SUPFAM" id="SSF52540">
    <property type="entry name" value="P-loop containing nucleoside triphosphate hydrolases"/>
    <property type="match status" value="1"/>
</dbReference>
<dbReference type="SUPFAM" id="SSF48452">
    <property type="entry name" value="TPR-like"/>
    <property type="match status" value="1"/>
</dbReference>
<dbReference type="PROSITE" id="PS00622">
    <property type="entry name" value="HTH_LUXR_1"/>
    <property type="match status" value="1"/>
</dbReference>
<dbReference type="PROSITE" id="PS50043">
    <property type="entry name" value="HTH_LUXR_2"/>
    <property type="match status" value="1"/>
</dbReference>